<sequence>MDEDGERRVRTKRSCSPESSDNGSGDEVDWISDLPEALIVLVLLNLPTKDVIKTSVLSTKWRNIWRYVPRLDLDNRHFTEFDSLASFIDRFMRSNRKVNKFKLRCGSDLDGDVDLATCSWKWIYMAIKRKVQHIDVTWPGVRIYPEIYNCESLVSLKLSEVTLTKPEFVSLPSLKVLVLDWVEFYNEFAFDMLMSGCPVLESFTLCRRYLDNVRVLRVISQSLLSFNYYGSSSKSFRDDLVVILDAPKLEKLKLSHQLTASFIIENLSSLVEADIDIEFNFCRGKKFDPDDLPKREMIRNFLVGLSRVKTMTIAACTLEVIYDYSRCEPLPLFPNLSFFSVEFYQKRWEILPFFFKSCSNLKSLVLESDYFPRKRTSIISEPRCLLSSLEYVKIEFALDKGKMELVRYLLENSPILKKLTLSLDHSSRKKSCVILRELITIPRCSTSCRVIVL</sequence>
<name>FDL7_ARATH</name>
<keyword id="KW-0433">Leucine-rich repeat</keyword>
<keyword id="KW-1185">Reference proteome</keyword>
<keyword id="KW-0677">Repeat</keyword>
<organism>
    <name type="scientific">Arabidopsis thaliana</name>
    <name type="common">Mouse-ear cress</name>
    <dbReference type="NCBI Taxonomy" id="3702"/>
    <lineage>
        <taxon>Eukaryota</taxon>
        <taxon>Viridiplantae</taxon>
        <taxon>Streptophyta</taxon>
        <taxon>Embryophyta</taxon>
        <taxon>Tracheophyta</taxon>
        <taxon>Spermatophyta</taxon>
        <taxon>Magnoliopsida</taxon>
        <taxon>eudicotyledons</taxon>
        <taxon>Gunneridae</taxon>
        <taxon>Pentapetalae</taxon>
        <taxon>rosids</taxon>
        <taxon>malvids</taxon>
        <taxon>Brassicales</taxon>
        <taxon>Brassicaceae</taxon>
        <taxon>Camelineae</taxon>
        <taxon>Arabidopsis</taxon>
    </lineage>
</organism>
<evidence type="ECO:0000255" key="1">
    <source>
        <dbReference type="PROSITE-ProRule" id="PRU00080"/>
    </source>
</evidence>
<evidence type="ECO:0000256" key="2">
    <source>
        <dbReference type="SAM" id="MobiDB-lite"/>
    </source>
</evidence>
<reference key="1">
    <citation type="journal article" date="2000" name="Nature">
        <title>Sequence and analysis of chromosome 1 of the plant Arabidopsis thaliana.</title>
        <authorList>
            <person name="Theologis A."/>
            <person name="Ecker J.R."/>
            <person name="Palm C.J."/>
            <person name="Federspiel N.A."/>
            <person name="Kaul S."/>
            <person name="White O."/>
            <person name="Alonso J."/>
            <person name="Altafi H."/>
            <person name="Araujo R."/>
            <person name="Bowman C.L."/>
            <person name="Brooks S.Y."/>
            <person name="Buehler E."/>
            <person name="Chan A."/>
            <person name="Chao Q."/>
            <person name="Chen H."/>
            <person name="Cheuk R.F."/>
            <person name="Chin C.W."/>
            <person name="Chung M.K."/>
            <person name="Conn L."/>
            <person name="Conway A.B."/>
            <person name="Conway A.R."/>
            <person name="Creasy T.H."/>
            <person name="Dewar K."/>
            <person name="Dunn P."/>
            <person name="Etgu P."/>
            <person name="Feldblyum T.V."/>
            <person name="Feng J.-D."/>
            <person name="Fong B."/>
            <person name="Fujii C.Y."/>
            <person name="Gill J.E."/>
            <person name="Goldsmith A.D."/>
            <person name="Haas B."/>
            <person name="Hansen N.F."/>
            <person name="Hughes B."/>
            <person name="Huizar L."/>
            <person name="Hunter J.L."/>
            <person name="Jenkins J."/>
            <person name="Johnson-Hopson C."/>
            <person name="Khan S."/>
            <person name="Khaykin E."/>
            <person name="Kim C.J."/>
            <person name="Koo H.L."/>
            <person name="Kremenetskaia I."/>
            <person name="Kurtz D.B."/>
            <person name="Kwan A."/>
            <person name="Lam B."/>
            <person name="Langin-Hooper S."/>
            <person name="Lee A."/>
            <person name="Lee J.M."/>
            <person name="Lenz C.A."/>
            <person name="Li J.H."/>
            <person name="Li Y.-P."/>
            <person name="Lin X."/>
            <person name="Liu S.X."/>
            <person name="Liu Z.A."/>
            <person name="Luros J.S."/>
            <person name="Maiti R."/>
            <person name="Marziali A."/>
            <person name="Militscher J."/>
            <person name="Miranda M."/>
            <person name="Nguyen M."/>
            <person name="Nierman W.C."/>
            <person name="Osborne B.I."/>
            <person name="Pai G."/>
            <person name="Peterson J."/>
            <person name="Pham P.K."/>
            <person name="Rizzo M."/>
            <person name="Rooney T."/>
            <person name="Rowley D."/>
            <person name="Sakano H."/>
            <person name="Salzberg S.L."/>
            <person name="Schwartz J.R."/>
            <person name="Shinn P."/>
            <person name="Southwick A.M."/>
            <person name="Sun H."/>
            <person name="Tallon L.J."/>
            <person name="Tambunga G."/>
            <person name="Toriumi M.J."/>
            <person name="Town C.D."/>
            <person name="Utterback T."/>
            <person name="Van Aken S."/>
            <person name="Vaysberg M."/>
            <person name="Vysotskaia V.S."/>
            <person name="Walker M."/>
            <person name="Wu D."/>
            <person name="Yu G."/>
            <person name="Fraser C.M."/>
            <person name="Venter J.C."/>
            <person name="Davis R.W."/>
        </authorList>
    </citation>
    <scope>NUCLEOTIDE SEQUENCE [LARGE SCALE GENOMIC DNA]</scope>
    <source>
        <strain>cv. Columbia</strain>
    </source>
</reference>
<reference key="2">
    <citation type="journal article" date="2017" name="Plant J.">
        <title>Araport11: a complete reannotation of the Arabidopsis thaliana reference genome.</title>
        <authorList>
            <person name="Cheng C.Y."/>
            <person name="Krishnakumar V."/>
            <person name="Chan A.P."/>
            <person name="Thibaud-Nissen F."/>
            <person name="Schobel S."/>
            <person name="Town C.D."/>
        </authorList>
    </citation>
    <scope>GENOME REANNOTATION</scope>
    <source>
        <strain>cv. Columbia</strain>
    </source>
</reference>
<feature type="chain" id="PRO_0000283100" description="Putative F-box/FBD/LRR-repeat protein At1g66290">
    <location>
        <begin position="1"/>
        <end position="453"/>
    </location>
</feature>
<feature type="domain" description="F-box" evidence="1">
    <location>
        <begin position="28"/>
        <end position="81"/>
    </location>
</feature>
<feature type="repeat" description="LRR 1">
    <location>
        <begin position="155"/>
        <end position="179"/>
    </location>
</feature>
<feature type="repeat" description="LRR 2">
    <location>
        <begin position="210"/>
        <end position="235"/>
    </location>
</feature>
<feature type="repeat" description="LRR 3">
    <location>
        <begin position="246"/>
        <end position="269"/>
    </location>
</feature>
<feature type="repeat" description="LRR 4">
    <location>
        <begin position="305"/>
        <end position="329"/>
    </location>
</feature>
<feature type="repeat" description="LRR 5">
    <location>
        <begin position="358"/>
        <end position="381"/>
    </location>
</feature>
<feature type="domain" description="FBD">
    <location>
        <begin position="373"/>
        <end position="423"/>
    </location>
</feature>
<feature type="region of interest" description="Disordered" evidence="2">
    <location>
        <begin position="1"/>
        <end position="28"/>
    </location>
</feature>
<feature type="compositionally biased region" description="Polar residues" evidence="2">
    <location>
        <begin position="14"/>
        <end position="23"/>
    </location>
</feature>
<gene>
    <name type="ordered locus">At1g66290</name>
    <name type="ORF">T27F4.4</name>
</gene>
<proteinExistence type="predicted"/>
<accession>Q9C8Y8</accession>
<dbReference type="EMBL" id="AC020665">
    <property type="protein sequence ID" value="AAG52161.1"/>
    <property type="molecule type" value="Genomic_DNA"/>
</dbReference>
<dbReference type="EMBL" id="CP002684">
    <property type="protein sequence ID" value="AEE34491.1"/>
    <property type="molecule type" value="Genomic_DNA"/>
</dbReference>
<dbReference type="PIR" id="A96688">
    <property type="entry name" value="A96688"/>
</dbReference>
<dbReference type="RefSeq" id="NP_176803.1">
    <property type="nucleotide sequence ID" value="NM_105300.1"/>
</dbReference>
<dbReference type="FunCoup" id="Q9C8Y8">
    <property type="interactions" value="5"/>
</dbReference>
<dbReference type="STRING" id="3702.Q9C8Y8"/>
<dbReference type="iPTMnet" id="Q9C8Y8"/>
<dbReference type="PaxDb" id="3702-AT1G66290.1"/>
<dbReference type="ProteomicsDB" id="230413"/>
<dbReference type="EnsemblPlants" id="AT1G66290.1">
    <property type="protein sequence ID" value="AT1G66290.1"/>
    <property type="gene ID" value="AT1G66290"/>
</dbReference>
<dbReference type="GeneID" id="842946"/>
<dbReference type="Gramene" id="AT1G66290.1">
    <property type="protein sequence ID" value="AT1G66290.1"/>
    <property type="gene ID" value="AT1G66290"/>
</dbReference>
<dbReference type="KEGG" id="ath:AT1G66290"/>
<dbReference type="Araport" id="AT1G66290"/>
<dbReference type="TAIR" id="AT1G66290"/>
<dbReference type="HOGENOM" id="CLU_010721_1_3_1"/>
<dbReference type="InParanoid" id="Q9C8Y8"/>
<dbReference type="OMA" id="TWILEFL"/>
<dbReference type="PhylomeDB" id="Q9C8Y8"/>
<dbReference type="PRO" id="PR:Q9C8Y8"/>
<dbReference type="Proteomes" id="UP000006548">
    <property type="component" value="Chromosome 1"/>
</dbReference>
<dbReference type="ExpressionAtlas" id="Q9C8Y8">
    <property type="expression patterns" value="baseline and differential"/>
</dbReference>
<dbReference type="CDD" id="cd22160">
    <property type="entry name" value="F-box_AtFBL13-like"/>
    <property type="match status" value="1"/>
</dbReference>
<dbReference type="Gene3D" id="3.80.10.10">
    <property type="entry name" value="Ribonuclease Inhibitor"/>
    <property type="match status" value="1"/>
</dbReference>
<dbReference type="InterPro" id="IPR036047">
    <property type="entry name" value="F-box-like_dom_sf"/>
</dbReference>
<dbReference type="InterPro" id="IPR053781">
    <property type="entry name" value="F-box_AtFBL13-like"/>
</dbReference>
<dbReference type="InterPro" id="IPR001810">
    <property type="entry name" value="F-box_dom"/>
</dbReference>
<dbReference type="InterPro" id="IPR006566">
    <property type="entry name" value="FBD"/>
</dbReference>
<dbReference type="InterPro" id="IPR050232">
    <property type="entry name" value="FBL13/AtMIF1-like"/>
</dbReference>
<dbReference type="InterPro" id="IPR032675">
    <property type="entry name" value="LRR_dom_sf"/>
</dbReference>
<dbReference type="InterPro" id="IPR055411">
    <property type="entry name" value="LRR_FXL15/At3g58940/PEG3-like"/>
</dbReference>
<dbReference type="PANTHER" id="PTHR31900">
    <property type="entry name" value="F-BOX/RNI SUPERFAMILY PROTEIN-RELATED"/>
    <property type="match status" value="1"/>
</dbReference>
<dbReference type="PANTHER" id="PTHR31900:SF25">
    <property type="entry name" value="FBD DOMAIN-CONTAINING PROTEIN"/>
    <property type="match status" value="1"/>
</dbReference>
<dbReference type="Pfam" id="PF00646">
    <property type="entry name" value="F-box"/>
    <property type="match status" value="1"/>
</dbReference>
<dbReference type="Pfam" id="PF08387">
    <property type="entry name" value="FBD"/>
    <property type="match status" value="1"/>
</dbReference>
<dbReference type="Pfam" id="PF24758">
    <property type="entry name" value="LRR_At5g56370"/>
    <property type="match status" value="1"/>
</dbReference>
<dbReference type="SMART" id="SM00579">
    <property type="entry name" value="FBD"/>
    <property type="match status" value="1"/>
</dbReference>
<dbReference type="SMART" id="SM00256">
    <property type="entry name" value="FBOX"/>
    <property type="match status" value="1"/>
</dbReference>
<dbReference type="SUPFAM" id="SSF81383">
    <property type="entry name" value="F-box domain"/>
    <property type="match status" value="1"/>
</dbReference>
<dbReference type="SUPFAM" id="SSF52047">
    <property type="entry name" value="RNI-like"/>
    <property type="match status" value="1"/>
</dbReference>
<dbReference type="PROSITE" id="PS50181">
    <property type="entry name" value="FBOX"/>
    <property type="match status" value="1"/>
</dbReference>
<protein>
    <recommendedName>
        <fullName>Putative F-box/FBD/LRR-repeat protein At1g66290</fullName>
    </recommendedName>
</protein>